<evidence type="ECO:0000255" key="1">
    <source>
        <dbReference type="HAMAP-Rule" id="MF_01804"/>
    </source>
</evidence>
<reference key="1">
    <citation type="journal article" date="2002" name="Genome Res.">
        <title>A complete sequence of the T. tengcongensis genome.</title>
        <authorList>
            <person name="Bao Q."/>
            <person name="Tian Y."/>
            <person name="Li W."/>
            <person name="Xu Z."/>
            <person name="Xuan Z."/>
            <person name="Hu S."/>
            <person name="Dong W."/>
            <person name="Yang J."/>
            <person name="Chen Y."/>
            <person name="Xue Y."/>
            <person name="Xu Y."/>
            <person name="Lai X."/>
            <person name="Huang L."/>
            <person name="Dong X."/>
            <person name="Ma Y."/>
            <person name="Ling L."/>
            <person name="Tan H."/>
            <person name="Chen R."/>
            <person name="Wang J."/>
            <person name="Yu J."/>
            <person name="Yang H."/>
        </authorList>
    </citation>
    <scope>NUCLEOTIDE SEQUENCE [LARGE SCALE GENOMIC DNA]</scope>
    <source>
        <strain>DSM 15242 / JCM 11007 / NBRC 100824 / MB4</strain>
    </source>
</reference>
<organism>
    <name type="scientific">Caldanaerobacter subterraneus subsp. tengcongensis (strain DSM 15242 / JCM 11007 / NBRC 100824 / MB4)</name>
    <name type="common">Thermoanaerobacter tengcongensis</name>
    <dbReference type="NCBI Taxonomy" id="273068"/>
    <lineage>
        <taxon>Bacteria</taxon>
        <taxon>Bacillati</taxon>
        <taxon>Bacillota</taxon>
        <taxon>Clostridia</taxon>
        <taxon>Thermoanaerobacterales</taxon>
        <taxon>Thermoanaerobacteraceae</taxon>
        <taxon>Caldanaerobacter</taxon>
    </lineage>
</organism>
<dbReference type="EMBL" id="AE008691">
    <property type="protein sequence ID" value="AAM24549.1"/>
    <property type="molecule type" value="Genomic_DNA"/>
</dbReference>
<dbReference type="RefSeq" id="WP_011025629.1">
    <property type="nucleotide sequence ID" value="NZ_JANUCV010000001.1"/>
</dbReference>
<dbReference type="SMR" id="Q8RAA0"/>
<dbReference type="STRING" id="273068.TTE1325"/>
<dbReference type="KEGG" id="tte:TTE1325"/>
<dbReference type="eggNOG" id="COG1386">
    <property type="taxonomic scope" value="Bacteria"/>
</dbReference>
<dbReference type="HOGENOM" id="CLU_045647_5_3_9"/>
<dbReference type="OrthoDB" id="9806226at2"/>
<dbReference type="Proteomes" id="UP000000555">
    <property type="component" value="Chromosome"/>
</dbReference>
<dbReference type="GO" id="GO:0005737">
    <property type="term" value="C:cytoplasm"/>
    <property type="evidence" value="ECO:0007669"/>
    <property type="project" value="UniProtKB-SubCell"/>
</dbReference>
<dbReference type="GO" id="GO:0051301">
    <property type="term" value="P:cell division"/>
    <property type="evidence" value="ECO:0007669"/>
    <property type="project" value="UniProtKB-KW"/>
</dbReference>
<dbReference type="GO" id="GO:0051304">
    <property type="term" value="P:chromosome separation"/>
    <property type="evidence" value="ECO:0007669"/>
    <property type="project" value="InterPro"/>
</dbReference>
<dbReference type="GO" id="GO:0006260">
    <property type="term" value="P:DNA replication"/>
    <property type="evidence" value="ECO:0007669"/>
    <property type="project" value="UniProtKB-UniRule"/>
</dbReference>
<dbReference type="Gene3D" id="1.10.10.10">
    <property type="entry name" value="Winged helix-like DNA-binding domain superfamily/Winged helix DNA-binding domain"/>
    <property type="match status" value="2"/>
</dbReference>
<dbReference type="HAMAP" id="MF_01804">
    <property type="entry name" value="ScpB"/>
    <property type="match status" value="1"/>
</dbReference>
<dbReference type="InterPro" id="IPR005234">
    <property type="entry name" value="ScpB_csome_segregation"/>
</dbReference>
<dbReference type="InterPro" id="IPR036388">
    <property type="entry name" value="WH-like_DNA-bd_sf"/>
</dbReference>
<dbReference type="InterPro" id="IPR036390">
    <property type="entry name" value="WH_DNA-bd_sf"/>
</dbReference>
<dbReference type="NCBIfam" id="TIGR00281">
    <property type="entry name" value="SMC-Scp complex subunit ScpB"/>
    <property type="match status" value="1"/>
</dbReference>
<dbReference type="PANTHER" id="PTHR34298">
    <property type="entry name" value="SEGREGATION AND CONDENSATION PROTEIN B"/>
    <property type="match status" value="1"/>
</dbReference>
<dbReference type="PANTHER" id="PTHR34298:SF2">
    <property type="entry name" value="SEGREGATION AND CONDENSATION PROTEIN B"/>
    <property type="match status" value="1"/>
</dbReference>
<dbReference type="Pfam" id="PF04079">
    <property type="entry name" value="SMC_ScpB"/>
    <property type="match status" value="1"/>
</dbReference>
<dbReference type="PIRSF" id="PIRSF019345">
    <property type="entry name" value="ScpB"/>
    <property type="match status" value="1"/>
</dbReference>
<dbReference type="SUPFAM" id="SSF46785">
    <property type="entry name" value="Winged helix' DNA-binding domain"/>
    <property type="match status" value="2"/>
</dbReference>
<feature type="chain" id="PRO_0000211165" description="Segregation and condensation protein B">
    <location>
        <begin position="1"/>
        <end position="168"/>
    </location>
</feature>
<sequence>MTQEGKIEAILFAAGQAVKIRTLAEALEVTEEEVRELLKRLKEEYVKNHRGIDIVIFEDKVEMCTNDSYGDIVRKALKMEITQGLSQAALEVLAIIAYNQPITKAEIERIRGVRSDKPINTLLEYNLIKESGRASSPGRPILYSTTEDFLKYFGISSLKELPEIEPTS</sequence>
<accession>Q8RAA0</accession>
<gene>
    <name evidence="1" type="primary">scpB</name>
    <name type="ordered locus">TTE1325</name>
</gene>
<protein>
    <recommendedName>
        <fullName evidence="1">Segregation and condensation protein B</fullName>
    </recommendedName>
</protein>
<name>SCPB_CALS4</name>
<keyword id="KW-0131">Cell cycle</keyword>
<keyword id="KW-0132">Cell division</keyword>
<keyword id="KW-0159">Chromosome partition</keyword>
<keyword id="KW-0963">Cytoplasm</keyword>
<keyword id="KW-1185">Reference proteome</keyword>
<proteinExistence type="inferred from homology"/>
<comment type="function">
    <text evidence="1">Participates in chromosomal partition during cell division. May act via the formation of a condensin-like complex containing Smc and ScpA that pull DNA away from mid-cell into both cell halves.</text>
</comment>
<comment type="subunit">
    <text evidence="1">Homodimer. Homodimerization may be required to stabilize the binding of ScpA to the Smc head domains. Component of a cohesin-like complex composed of ScpA, ScpB and the Smc homodimer, in which ScpA and ScpB bind to the head domain of Smc. The presence of the three proteins is required for the association of the complex with DNA.</text>
</comment>
<comment type="subcellular location">
    <subcellularLocation>
        <location evidence="1">Cytoplasm</location>
    </subcellularLocation>
    <text evidence="1">Associated with two foci at the outer edges of the nucleoid region in young cells, and at four foci within both cell halves in older cells.</text>
</comment>
<comment type="similarity">
    <text evidence="1">Belongs to the ScpB family.</text>
</comment>